<gene>
    <name evidence="1" type="primary">rplL</name>
    <name type="ordered locus">ASA_0282</name>
</gene>
<comment type="function">
    <text evidence="1">Forms part of the ribosomal stalk which helps the ribosome interact with GTP-bound translation factors. Is thus essential for accurate translation.</text>
</comment>
<comment type="subunit">
    <text evidence="1">Homodimer. Part of the ribosomal stalk of the 50S ribosomal subunit. Forms a multimeric L10(L12)X complex, where L10 forms an elongated spine to which 2 to 4 L12 dimers bind in a sequential fashion. Binds GTP-bound translation factors.</text>
</comment>
<comment type="similarity">
    <text evidence="1">Belongs to the bacterial ribosomal protein bL12 family.</text>
</comment>
<proteinExistence type="inferred from homology"/>
<keyword id="KW-0687">Ribonucleoprotein</keyword>
<keyword id="KW-0689">Ribosomal protein</keyword>
<feature type="chain" id="PRO_1000006953" description="Large ribosomal subunit protein bL12">
    <location>
        <begin position="1"/>
        <end position="120"/>
    </location>
</feature>
<accession>A4SHU8</accession>
<sequence>MSITKDQIIEAVASMSVMEVVELIEAMEEKFGVSAAVAVAAGPAAEAVEEKTEFDVVLTAAGANKVAVIKAVRAATGLGLKEAKDLVEAAPANLKEAISKDEAETLKKQLEEAGASVEIK</sequence>
<evidence type="ECO:0000255" key="1">
    <source>
        <dbReference type="HAMAP-Rule" id="MF_00368"/>
    </source>
</evidence>
<evidence type="ECO:0000305" key="2"/>
<organism>
    <name type="scientific">Aeromonas salmonicida (strain A449)</name>
    <dbReference type="NCBI Taxonomy" id="382245"/>
    <lineage>
        <taxon>Bacteria</taxon>
        <taxon>Pseudomonadati</taxon>
        <taxon>Pseudomonadota</taxon>
        <taxon>Gammaproteobacteria</taxon>
        <taxon>Aeromonadales</taxon>
        <taxon>Aeromonadaceae</taxon>
        <taxon>Aeromonas</taxon>
    </lineage>
</organism>
<dbReference type="EMBL" id="CP000644">
    <property type="protein sequence ID" value="ABO88470.1"/>
    <property type="molecule type" value="Genomic_DNA"/>
</dbReference>
<dbReference type="RefSeq" id="WP_005318565.1">
    <property type="nucleotide sequence ID" value="NC_009348.1"/>
</dbReference>
<dbReference type="SMR" id="A4SHU8"/>
<dbReference type="STRING" id="29491.GCA_000820065_03159"/>
<dbReference type="GeneID" id="79881715"/>
<dbReference type="KEGG" id="asa:ASA_0282"/>
<dbReference type="eggNOG" id="COG0222">
    <property type="taxonomic scope" value="Bacteria"/>
</dbReference>
<dbReference type="HOGENOM" id="CLU_086499_3_2_6"/>
<dbReference type="Proteomes" id="UP000000225">
    <property type="component" value="Chromosome"/>
</dbReference>
<dbReference type="GO" id="GO:0022625">
    <property type="term" value="C:cytosolic large ribosomal subunit"/>
    <property type="evidence" value="ECO:0007669"/>
    <property type="project" value="TreeGrafter"/>
</dbReference>
<dbReference type="GO" id="GO:0003729">
    <property type="term" value="F:mRNA binding"/>
    <property type="evidence" value="ECO:0007669"/>
    <property type="project" value="TreeGrafter"/>
</dbReference>
<dbReference type="GO" id="GO:0003735">
    <property type="term" value="F:structural constituent of ribosome"/>
    <property type="evidence" value="ECO:0007669"/>
    <property type="project" value="InterPro"/>
</dbReference>
<dbReference type="GO" id="GO:0006412">
    <property type="term" value="P:translation"/>
    <property type="evidence" value="ECO:0007669"/>
    <property type="project" value="UniProtKB-UniRule"/>
</dbReference>
<dbReference type="CDD" id="cd00387">
    <property type="entry name" value="Ribosomal_L7_L12"/>
    <property type="match status" value="1"/>
</dbReference>
<dbReference type="FunFam" id="1.20.5.710:FF:000001">
    <property type="entry name" value="50S ribosomal protein L7/L12"/>
    <property type="match status" value="1"/>
</dbReference>
<dbReference type="FunFam" id="3.30.1390.10:FF:000001">
    <property type="entry name" value="50S ribosomal protein L7/L12"/>
    <property type="match status" value="1"/>
</dbReference>
<dbReference type="Gene3D" id="3.30.1390.10">
    <property type="match status" value="1"/>
</dbReference>
<dbReference type="Gene3D" id="1.20.5.710">
    <property type="entry name" value="Single helix bin"/>
    <property type="match status" value="1"/>
</dbReference>
<dbReference type="HAMAP" id="MF_00368">
    <property type="entry name" value="Ribosomal_bL12"/>
    <property type="match status" value="1"/>
</dbReference>
<dbReference type="InterPro" id="IPR000206">
    <property type="entry name" value="Ribosomal_bL12"/>
</dbReference>
<dbReference type="InterPro" id="IPR013823">
    <property type="entry name" value="Ribosomal_bL12_C"/>
</dbReference>
<dbReference type="InterPro" id="IPR014719">
    <property type="entry name" value="Ribosomal_bL12_C/ClpS-like"/>
</dbReference>
<dbReference type="InterPro" id="IPR008932">
    <property type="entry name" value="Ribosomal_bL12_oligo"/>
</dbReference>
<dbReference type="InterPro" id="IPR036235">
    <property type="entry name" value="Ribosomal_bL12_oligo_N_sf"/>
</dbReference>
<dbReference type="NCBIfam" id="TIGR00855">
    <property type="entry name" value="L12"/>
    <property type="match status" value="1"/>
</dbReference>
<dbReference type="PANTHER" id="PTHR45987">
    <property type="entry name" value="39S RIBOSOMAL PROTEIN L12"/>
    <property type="match status" value="1"/>
</dbReference>
<dbReference type="PANTHER" id="PTHR45987:SF4">
    <property type="entry name" value="LARGE RIBOSOMAL SUBUNIT PROTEIN BL12M"/>
    <property type="match status" value="1"/>
</dbReference>
<dbReference type="Pfam" id="PF00542">
    <property type="entry name" value="Ribosomal_L12"/>
    <property type="match status" value="1"/>
</dbReference>
<dbReference type="Pfam" id="PF16320">
    <property type="entry name" value="Ribosomal_L12_N"/>
    <property type="match status" value="1"/>
</dbReference>
<dbReference type="SUPFAM" id="SSF54736">
    <property type="entry name" value="ClpS-like"/>
    <property type="match status" value="1"/>
</dbReference>
<dbReference type="SUPFAM" id="SSF48300">
    <property type="entry name" value="Ribosomal protein L7/12, oligomerisation (N-terminal) domain"/>
    <property type="match status" value="1"/>
</dbReference>
<name>RL7_AERS4</name>
<protein>
    <recommendedName>
        <fullName evidence="1">Large ribosomal subunit protein bL12</fullName>
    </recommendedName>
    <alternativeName>
        <fullName evidence="2">50S ribosomal protein L7/L12</fullName>
    </alternativeName>
</protein>
<reference key="1">
    <citation type="journal article" date="2008" name="BMC Genomics">
        <title>The genome of Aeromonas salmonicida subsp. salmonicida A449: insights into the evolution of a fish pathogen.</title>
        <authorList>
            <person name="Reith M.E."/>
            <person name="Singh R.K."/>
            <person name="Curtis B."/>
            <person name="Boyd J.M."/>
            <person name="Bouevitch A."/>
            <person name="Kimball J."/>
            <person name="Munholland J."/>
            <person name="Murphy C."/>
            <person name="Sarty D."/>
            <person name="Williams J."/>
            <person name="Nash J.H."/>
            <person name="Johnson S.C."/>
            <person name="Brown L.L."/>
        </authorList>
    </citation>
    <scope>NUCLEOTIDE SEQUENCE [LARGE SCALE GENOMIC DNA]</scope>
    <source>
        <strain>A449</strain>
    </source>
</reference>